<keyword id="KW-0029">Amino-acid transport</keyword>
<keyword id="KW-0997">Cell inner membrane</keyword>
<keyword id="KW-1003">Cell membrane</keyword>
<keyword id="KW-0472">Membrane</keyword>
<keyword id="KW-0769">Symport</keyword>
<keyword id="KW-0812">Transmembrane</keyword>
<keyword id="KW-1133">Transmembrane helix</keyword>
<keyword id="KW-0813">Transport</keyword>
<comment type="function">
    <text evidence="1">Involved in the import of threonine and serine into the cell, with the concomitant import of a proton (symport system).</text>
</comment>
<comment type="catalytic activity">
    <reaction evidence="1">
        <text>L-threonine(in) + H(+)(in) = L-threonine(out) + H(+)(out)</text>
        <dbReference type="Rhea" id="RHEA:28883"/>
        <dbReference type="ChEBI" id="CHEBI:15378"/>
        <dbReference type="ChEBI" id="CHEBI:57926"/>
    </reaction>
    <physiologicalReaction direction="right-to-left" evidence="1">
        <dbReference type="Rhea" id="RHEA:28885"/>
    </physiologicalReaction>
</comment>
<comment type="catalytic activity">
    <reaction evidence="1">
        <text>L-serine(in) + H(+)(in) = L-serine(out) + H(+)(out)</text>
        <dbReference type="Rhea" id="RHEA:28887"/>
        <dbReference type="ChEBI" id="CHEBI:15378"/>
        <dbReference type="ChEBI" id="CHEBI:33384"/>
    </reaction>
    <physiologicalReaction direction="right-to-left" evidence="1">
        <dbReference type="Rhea" id="RHEA:28889"/>
    </physiologicalReaction>
</comment>
<comment type="subcellular location">
    <subcellularLocation>
        <location evidence="1">Cell inner membrane</location>
        <topology evidence="1">Multi-pass membrane protein</topology>
    </subcellularLocation>
</comment>
<comment type="similarity">
    <text evidence="1">Belongs to the amino acid/polyamine transporter 2 family. SdaC/TdcC subfamily.</text>
</comment>
<protein>
    <recommendedName>
        <fullName evidence="1">Threonine/serine transporter TdcC</fullName>
    </recommendedName>
    <alternativeName>
        <fullName evidence="1">H(+)/threonine-serine symporter</fullName>
    </alternativeName>
</protein>
<gene>
    <name evidence="1" type="primary">tdcC</name>
    <name type="ordered locus">ECDH10B_3290</name>
</gene>
<evidence type="ECO:0000255" key="1">
    <source>
        <dbReference type="HAMAP-Rule" id="MF_01583"/>
    </source>
</evidence>
<sequence>MSTSDSIVSSQTKQSSWRKSDTTWTLGLFGTAIGAGVLFFPIRAGFGGLIPILLMLVLAYPIAFYCHRALARLCLSGSNPSGNITETVEEHFGKTGGVVITFLYFFAICPLLWIYGVTITNTFMTFWENQLGFAPLNRGFVALFLLLLMAFVIWFGKDLMVKVMSYLVWPFIASLVLISLSLIPYWNSAVIDQVDLGSLSLTGHDGILITVWLGISIMVFSFNFSPIVSSFVVSKREEYEKDFGRDFTERKCSQIISRASMLMVAVVMFFAFSCLFTLSPANMAEAKAQNIPVLSYLANHFASMTGTKTTFAITLEYAASIIALVAIFKSFFGHYLGTLEGLNGLVLKFGYKGDKTKVSLGKLNTISMIFIMGSTWVVAYANPNILDLIEAMGAPIIASLLCLLPMYAIRKAPSLAKYRGRLDNVFVTVIGLLTILNIVYKLF</sequence>
<feature type="chain" id="PRO_1000147629" description="Threonine/serine transporter TdcC">
    <location>
        <begin position="1"/>
        <end position="443"/>
    </location>
</feature>
<feature type="transmembrane region" description="Helical" evidence="1">
    <location>
        <begin position="22"/>
        <end position="42"/>
    </location>
</feature>
<feature type="transmembrane region" description="Helical" evidence="1">
    <location>
        <begin position="44"/>
        <end position="64"/>
    </location>
</feature>
<feature type="transmembrane region" description="Helical" evidence="1">
    <location>
        <begin position="97"/>
        <end position="117"/>
    </location>
</feature>
<feature type="transmembrane region" description="Helical" evidence="1">
    <location>
        <begin position="140"/>
        <end position="160"/>
    </location>
</feature>
<feature type="transmembrane region" description="Helical" evidence="1">
    <location>
        <begin position="163"/>
        <end position="183"/>
    </location>
</feature>
<feature type="transmembrane region" description="Helical" evidence="1">
    <location>
        <begin position="207"/>
        <end position="227"/>
    </location>
</feature>
<feature type="transmembrane region" description="Helical" evidence="1">
    <location>
        <begin position="261"/>
        <end position="281"/>
    </location>
</feature>
<feature type="transmembrane region" description="Helical" evidence="1">
    <location>
        <begin position="311"/>
        <end position="331"/>
    </location>
</feature>
<feature type="transmembrane region" description="Helical" evidence="1">
    <location>
        <begin position="366"/>
        <end position="386"/>
    </location>
</feature>
<feature type="transmembrane region" description="Helical" evidence="1">
    <location>
        <begin position="389"/>
        <end position="409"/>
    </location>
</feature>
<feature type="transmembrane region" description="Helical" evidence="1">
    <location>
        <begin position="423"/>
        <end position="443"/>
    </location>
</feature>
<reference key="1">
    <citation type="journal article" date="2008" name="J. Bacteriol.">
        <title>The complete genome sequence of Escherichia coli DH10B: insights into the biology of a laboratory workhorse.</title>
        <authorList>
            <person name="Durfee T."/>
            <person name="Nelson R."/>
            <person name="Baldwin S."/>
            <person name="Plunkett G. III"/>
            <person name="Burland V."/>
            <person name="Mau B."/>
            <person name="Petrosino J.F."/>
            <person name="Qin X."/>
            <person name="Muzny D.M."/>
            <person name="Ayele M."/>
            <person name="Gibbs R.A."/>
            <person name="Csorgo B."/>
            <person name="Posfai G."/>
            <person name="Weinstock G.M."/>
            <person name="Blattner F.R."/>
        </authorList>
    </citation>
    <scope>NUCLEOTIDE SEQUENCE [LARGE SCALE GENOMIC DNA]</scope>
    <source>
        <strain>K12 / DH10B</strain>
    </source>
</reference>
<accession>B1XGT1</accession>
<dbReference type="EMBL" id="CP000948">
    <property type="protein sequence ID" value="ACB04198.1"/>
    <property type="molecule type" value="Genomic_DNA"/>
</dbReference>
<dbReference type="RefSeq" id="WP_000107723.1">
    <property type="nucleotide sequence ID" value="NC_010473.1"/>
</dbReference>
<dbReference type="SMR" id="B1XGT1"/>
<dbReference type="GeneID" id="93778869"/>
<dbReference type="KEGG" id="ecd:ECDH10B_3290"/>
<dbReference type="HOGENOM" id="CLU_052043_1_1_6"/>
<dbReference type="GO" id="GO:0005886">
    <property type="term" value="C:plasma membrane"/>
    <property type="evidence" value="ECO:0007669"/>
    <property type="project" value="UniProtKB-SubCell"/>
</dbReference>
<dbReference type="GO" id="GO:0015194">
    <property type="term" value="F:L-serine transmembrane transporter activity"/>
    <property type="evidence" value="ECO:0007669"/>
    <property type="project" value="InterPro"/>
</dbReference>
<dbReference type="GO" id="GO:0015293">
    <property type="term" value="F:symporter activity"/>
    <property type="evidence" value="ECO:0007669"/>
    <property type="project" value="UniProtKB-UniRule"/>
</dbReference>
<dbReference type="GO" id="GO:0015565">
    <property type="term" value="F:threonine efflux transmembrane transporter activity"/>
    <property type="evidence" value="ECO:0007669"/>
    <property type="project" value="InterPro"/>
</dbReference>
<dbReference type="HAMAP" id="MF_01583">
    <property type="entry name" value="Thr_Ser_transp_TdcC"/>
    <property type="match status" value="1"/>
</dbReference>
<dbReference type="InterPro" id="IPR018227">
    <property type="entry name" value="Amino_acid_transport_2"/>
</dbReference>
<dbReference type="InterPro" id="IPR004694">
    <property type="entry name" value="Hydroxy_aa_transpt"/>
</dbReference>
<dbReference type="InterPro" id="IPR023726">
    <property type="entry name" value="Thr/Ser_transpt_TdcC"/>
</dbReference>
<dbReference type="NCBIfam" id="NF010152">
    <property type="entry name" value="PRK13629.1"/>
    <property type="match status" value="1"/>
</dbReference>
<dbReference type="NCBIfam" id="TIGR00814">
    <property type="entry name" value="stp"/>
    <property type="match status" value="1"/>
</dbReference>
<dbReference type="PANTHER" id="PTHR35334">
    <property type="entry name" value="SERINE TRANSPORTER"/>
    <property type="match status" value="1"/>
</dbReference>
<dbReference type="PANTHER" id="PTHR35334:SF1">
    <property type="entry name" value="THREONINE_SERINE TRANSPORTER TDCC"/>
    <property type="match status" value="1"/>
</dbReference>
<dbReference type="Pfam" id="PF03222">
    <property type="entry name" value="Trp_Tyr_perm"/>
    <property type="match status" value="1"/>
</dbReference>
<proteinExistence type="inferred from homology"/>
<organism>
    <name type="scientific">Escherichia coli (strain K12 / DH10B)</name>
    <dbReference type="NCBI Taxonomy" id="316385"/>
    <lineage>
        <taxon>Bacteria</taxon>
        <taxon>Pseudomonadati</taxon>
        <taxon>Pseudomonadota</taxon>
        <taxon>Gammaproteobacteria</taxon>
        <taxon>Enterobacterales</taxon>
        <taxon>Enterobacteriaceae</taxon>
        <taxon>Escherichia</taxon>
    </lineage>
</organism>
<name>TDCC_ECODH</name>